<evidence type="ECO:0000255" key="1">
    <source>
        <dbReference type="HAMAP-Rule" id="MF_01341"/>
    </source>
</evidence>
<evidence type="ECO:0000256" key="2">
    <source>
        <dbReference type="SAM" id="MobiDB-lite"/>
    </source>
</evidence>
<evidence type="ECO:0000305" key="3"/>
<gene>
    <name evidence="1" type="primary">rplO</name>
    <name type="ordered locus">RSKD131_0033</name>
</gene>
<keyword id="KW-0687">Ribonucleoprotein</keyword>
<keyword id="KW-0689">Ribosomal protein</keyword>
<keyword id="KW-0694">RNA-binding</keyword>
<keyword id="KW-0699">rRNA-binding</keyword>
<reference key="1">
    <citation type="journal article" date="2009" name="J. Bacteriol.">
        <title>Complete genome sequence of Rhodobacter sphaeroides KD131.</title>
        <authorList>
            <person name="Lim S.-K."/>
            <person name="Kim S.J."/>
            <person name="Cha S.H."/>
            <person name="Oh Y.-K."/>
            <person name="Rhee H.-J."/>
            <person name="Kim M.-S."/>
            <person name="Lee J.K."/>
        </authorList>
    </citation>
    <scope>NUCLEOTIDE SEQUENCE [LARGE SCALE GENOMIC DNA]</scope>
    <source>
        <strain>KD131 / KCTC 12085</strain>
    </source>
</reference>
<feature type="chain" id="PRO_1000166311" description="Large ribosomal subunit protein uL15">
    <location>
        <begin position="1"/>
        <end position="161"/>
    </location>
</feature>
<feature type="region of interest" description="Disordered" evidence="2">
    <location>
        <begin position="1"/>
        <end position="51"/>
    </location>
</feature>
<feature type="compositionally biased region" description="Basic and acidic residues" evidence="2">
    <location>
        <begin position="1"/>
        <end position="13"/>
    </location>
</feature>
<feature type="compositionally biased region" description="Gly residues" evidence="2">
    <location>
        <begin position="23"/>
        <end position="35"/>
    </location>
</feature>
<comment type="function">
    <text evidence="1">Binds to the 23S rRNA.</text>
</comment>
<comment type="subunit">
    <text evidence="1">Part of the 50S ribosomal subunit.</text>
</comment>
<comment type="similarity">
    <text evidence="1">Belongs to the universal ribosomal protein uL15 family.</text>
</comment>
<sequence>MKLNELRDNEGAARKKKRVARGPGSGKGKTAGRGIKGQKSRSGVALNGYEGGQMPLYRRLPKRGFTKPNRKEYAVVNLGLIQKFVDAGKLDASQPIDENAIVAAGVTSHKRDGIRVLAKGEITAKLALTVSGASKSAVEAIEKAGGSITLTAPAAAAASAE</sequence>
<dbReference type="EMBL" id="CP001150">
    <property type="protein sequence ID" value="ACL99892.1"/>
    <property type="molecule type" value="Genomic_DNA"/>
</dbReference>
<dbReference type="RefSeq" id="WP_009563657.1">
    <property type="nucleotide sequence ID" value="NC_011963.1"/>
</dbReference>
<dbReference type="SMR" id="B9KLB0"/>
<dbReference type="GeneID" id="67445519"/>
<dbReference type="KEGG" id="rsk:RSKD131_0033"/>
<dbReference type="HOGENOM" id="CLU_055188_4_0_5"/>
<dbReference type="GO" id="GO:0015934">
    <property type="term" value="C:large ribosomal subunit"/>
    <property type="evidence" value="ECO:0007669"/>
    <property type="project" value="InterPro"/>
</dbReference>
<dbReference type="GO" id="GO:0019843">
    <property type="term" value="F:rRNA binding"/>
    <property type="evidence" value="ECO:0007669"/>
    <property type="project" value="UniProtKB-UniRule"/>
</dbReference>
<dbReference type="GO" id="GO:0003735">
    <property type="term" value="F:structural constituent of ribosome"/>
    <property type="evidence" value="ECO:0007669"/>
    <property type="project" value="InterPro"/>
</dbReference>
<dbReference type="GO" id="GO:0006412">
    <property type="term" value="P:translation"/>
    <property type="evidence" value="ECO:0007669"/>
    <property type="project" value="UniProtKB-UniRule"/>
</dbReference>
<dbReference type="Gene3D" id="3.100.10.10">
    <property type="match status" value="1"/>
</dbReference>
<dbReference type="HAMAP" id="MF_01341">
    <property type="entry name" value="Ribosomal_uL15"/>
    <property type="match status" value="1"/>
</dbReference>
<dbReference type="InterPro" id="IPR030878">
    <property type="entry name" value="Ribosomal_uL15"/>
</dbReference>
<dbReference type="InterPro" id="IPR021131">
    <property type="entry name" value="Ribosomal_uL15/eL18"/>
</dbReference>
<dbReference type="InterPro" id="IPR036227">
    <property type="entry name" value="Ribosomal_uL15/eL18_sf"/>
</dbReference>
<dbReference type="InterPro" id="IPR005749">
    <property type="entry name" value="Ribosomal_uL15_bac-type"/>
</dbReference>
<dbReference type="InterPro" id="IPR001196">
    <property type="entry name" value="Ribosomal_uL15_CS"/>
</dbReference>
<dbReference type="NCBIfam" id="TIGR01071">
    <property type="entry name" value="rplO_bact"/>
    <property type="match status" value="1"/>
</dbReference>
<dbReference type="PANTHER" id="PTHR12934">
    <property type="entry name" value="50S RIBOSOMAL PROTEIN L15"/>
    <property type="match status" value="1"/>
</dbReference>
<dbReference type="PANTHER" id="PTHR12934:SF11">
    <property type="entry name" value="LARGE RIBOSOMAL SUBUNIT PROTEIN UL15M"/>
    <property type="match status" value="1"/>
</dbReference>
<dbReference type="Pfam" id="PF00828">
    <property type="entry name" value="Ribosomal_L27A"/>
    <property type="match status" value="1"/>
</dbReference>
<dbReference type="SUPFAM" id="SSF52080">
    <property type="entry name" value="Ribosomal proteins L15p and L18e"/>
    <property type="match status" value="1"/>
</dbReference>
<dbReference type="PROSITE" id="PS00475">
    <property type="entry name" value="RIBOSOMAL_L15"/>
    <property type="match status" value="1"/>
</dbReference>
<accession>B9KLB0</accession>
<organism>
    <name type="scientific">Cereibacter sphaeroides (strain KD131 / KCTC 12085)</name>
    <name type="common">Rhodobacter sphaeroides</name>
    <dbReference type="NCBI Taxonomy" id="557760"/>
    <lineage>
        <taxon>Bacteria</taxon>
        <taxon>Pseudomonadati</taxon>
        <taxon>Pseudomonadota</taxon>
        <taxon>Alphaproteobacteria</taxon>
        <taxon>Rhodobacterales</taxon>
        <taxon>Paracoccaceae</taxon>
        <taxon>Cereibacter</taxon>
    </lineage>
</organism>
<name>RL15_CERSK</name>
<protein>
    <recommendedName>
        <fullName evidence="1">Large ribosomal subunit protein uL15</fullName>
    </recommendedName>
    <alternativeName>
        <fullName evidence="3">50S ribosomal protein L15</fullName>
    </alternativeName>
</protein>
<proteinExistence type="inferred from homology"/>